<comment type="function">
    <text evidence="1">Catalyzes the phosphorylation of D-fructose 6-phosphate to fructose 1,6-bisphosphate by ATP, the first committing step of glycolysis.</text>
</comment>
<comment type="catalytic activity">
    <reaction evidence="1">
        <text>beta-D-fructose 6-phosphate + ATP = beta-D-fructose 1,6-bisphosphate + ADP + H(+)</text>
        <dbReference type="Rhea" id="RHEA:16109"/>
        <dbReference type="ChEBI" id="CHEBI:15378"/>
        <dbReference type="ChEBI" id="CHEBI:30616"/>
        <dbReference type="ChEBI" id="CHEBI:32966"/>
        <dbReference type="ChEBI" id="CHEBI:57634"/>
        <dbReference type="ChEBI" id="CHEBI:456216"/>
        <dbReference type="EC" id="2.7.1.11"/>
    </reaction>
</comment>
<comment type="cofactor">
    <cofactor evidence="1">
        <name>Mg(2+)</name>
        <dbReference type="ChEBI" id="CHEBI:18420"/>
    </cofactor>
</comment>
<comment type="activity regulation">
    <text evidence="1">Allosterically activated by ADP and other diphosphonucleosides, and allosterically inhibited by phosphoenolpyruvate.</text>
</comment>
<comment type="pathway">
    <text evidence="1">Carbohydrate degradation; glycolysis; D-glyceraldehyde 3-phosphate and glycerone phosphate from D-glucose: step 3/4.</text>
</comment>
<comment type="subunit">
    <text evidence="1">Homotetramer.</text>
</comment>
<comment type="subcellular location">
    <subcellularLocation>
        <location evidence="1">Cytoplasm</location>
    </subcellularLocation>
</comment>
<comment type="similarity">
    <text evidence="1">Belongs to the phosphofructokinase type A (PFKA) family. ATP-dependent PFK group I subfamily. Prokaryotic clade 'B1' sub-subfamily.</text>
</comment>
<organism>
    <name type="scientific">Shouchella clausii (strain KSM-K16)</name>
    <name type="common">Alkalihalobacillus clausii</name>
    <dbReference type="NCBI Taxonomy" id="66692"/>
    <lineage>
        <taxon>Bacteria</taxon>
        <taxon>Bacillati</taxon>
        <taxon>Bacillota</taxon>
        <taxon>Bacilli</taxon>
        <taxon>Bacillales</taxon>
        <taxon>Bacillaceae</taxon>
        <taxon>Shouchella</taxon>
    </lineage>
</organism>
<feature type="chain" id="PRO_1000059746" description="ATP-dependent 6-phosphofructokinase">
    <location>
        <begin position="1"/>
        <end position="319"/>
    </location>
</feature>
<feature type="active site" description="Proton acceptor" evidence="1">
    <location>
        <position position="127"/>
    </location>
</feature>
<feature type="binding site" evidence="1">
    <location>
        <position position="11"/>
    </location>
    <ligand>
        <name>ATP</name>
        <dbReference type="ChEBI" id="CHEBI:30616"/>
    </ligand>
</feature>
<feature type="binding site" evidence="1">
    <location>
        <begin position="21"/>
        <end position="25"/>
    </location>
    <ligand>
        <name>ADP</name>
        <dbReference type="ChEBI" id="CHEBI:456216"/>
        <note>allosteric activator; ligand shared between dimeric partners</note>
    </ligand>
</feature>
<feature type="binding site" evidence="1">
    <location>
        <begin position="72"/>
        <end position="73"/>
    </location>
    <ligand>
        <name>ATP</name>
        <dbReference type="ChEBI" id="CHEBI:30616"/>
    </ligand>
</feature>
<feature type="binding site" evidence="1">
    <location>
        <begin position="102"/>
        <end position="105"/>
    </location>
    <ligand>
        <name>ATP</name>
        <dbReference type="ChEBI" id="CHEBI:30616"/>
    </ligand>
</feature>
<feature type="binding site" evidence="1">
    <location>
        <position position="103"/>
    </location>
    <ligand>
        <name>Mg(2+)</name>
        <dbReference type="ChEBI" id="CHEBI:18420"/>
        <note>catalytic</note>
    </ligand>
</feature>
<feature type="binding site" description="in other chain" evidence="1">
    <location>
        <begin position="125"/>
        <end position="127"/>
    </location>
    <ligand>
        <name>substrate</name>
        <note>ligand shared between dimeric partners</note>
    </ligand>
</feature>
<feature type="binding site" description="in other chain" evidence="1">
    <location>
        <position position="154"/>
    </location>
    <ligand>
        <name>ADP</name>
        <dbReference type="ChEBI" id="CHEBI:456216"/>
        <note>allosteric activator; ligand shared between dimeric partners</note>
    </ligand>
</feature>
<feature type="binding site" evidence="1">
    <location>
        <position position="162"/>
    </location>
    <ligand>
        <name>substrate</name>
        <note>ligand shared between dimeric partners</note>
    </ligand>
</feature>
<feature type="binding site" description="in other chain" evidence="1">
    <location>
        <begin position="169"/>
        <end position="171"/>
    </location>
    <ligand>
        <name>substrate</name>
        <note>ligand shared between dimeric partners</note>
    </ligand>
</feature>
<feature type="binding site" description="in other chain" evidence="1">
    <location>
        <begin position="185"/>
        <end position="187"/>
    </location>
    <ligand>
        <name>ADP</name>
        <dbReference type="ChEBI" id="CHEBI:456216"/>
        <note>allosteric activator; ligand shared between dimeric partners</note>
    </ligand>
</feature>
<feature type="binding site" description="in other chain" evidence="1">
    <location>
        <position position="211"/>
    </location>
    <ligand>
        <name>ADP</name>
        <dbReference type="ChEBI" id="CHEBI:456216"/>
        <note>allosteric activator; ligand shared between dimeric partners</note>
    </ligand>
</feature>
<feature type="binding site" description="in other chain" evidence="1">
    <location>
        <begin position="213"/>
        <end position="215"/>
    </location>
    <ligand>
        <name>ADP</name>
        <dbReference type="ChEBI" id="CHEBI:456216"/>
        <note>allosteric activator; ligand shared between dimeric partners</note>
    </ligand>
</feature>
<feature type="binding site" description="in other chain" evidence="1">
    <location>
        <position position="222"/>
    </location>
    <ligand>
        <name>substrate</name>
        <note>ligand shared between dimeric partners</note>
    </ligand>
</feature>
<feature type="binding site" evidence="1">
    <location>
        <position position="243"/>
    </location>
    <ligand>
        <name>substrate</name>
        <note>ligand shared between dimeric partners</note>
    </ligand>
</feature>
<feature type="binding site" description="in other chain" evidence="1">
    <location>
        <begin position="249"/>
        <end position="252"/>
    </location>
    <ligand>
        <name>substrate</name>
        <note>ligand shared between dimeric partners</note>
    </ligand>
</feature>
<protein>
    <recommendedName>
        <fullName evidence="1">ATP-dependent 6-phosphofructokinase</fullName>
        <shortName evidence="1">ATP-PFK</shortName>
        <shortName evidence="1">Phosphofructokinase</shortName>
        <ecNumber evidence="1">2.7.1.11</ecNumber>
    </recommendedName>
    <alternativeName>
        <fullName evidence="1">Phosphohexokinase</fullName>
    </alternativeName>
</protein>
<evidence type="ECO:0000255" key="1">
    <source>
        <dbReference type="HAMAP-Rule" id="MF_00339"/>
    </source>
</evidence>
<keyword id="KW-0021">Allosteric enzyme</keyword>
<keyword id="KW-0067">ATP-binding</keyword>
<keyword id="KW-0963">Cytoplasm</keyword>
<keyword id="KW-0324">Glycolysis</keyword>
<keyword id="KW-0418">Kinase</keyword>
<keyword id="KW-0460">Magnesium</keyword>
<keyword id="KW-0479">Metal-binding</keyword>
<keyword id="KW-0547">Nucleotide-binding</keyword>
<keyword id="KW-1185">Reference proteome</keyword>
<keyword id="KW-0808">Transferase</keyword>
<reference key="1">
    <citation type="submission" date="2003-10" db="EMBL/GenBank/DDBJ databases">
        <title>The complete genome sequence of the alkaliphilic Bacillus clausii KSM-K16.</title>
        <authorList>
            <person name="Takaki Y."/>
            <person name="Kageyama Y."/>
            <person name="Shimamura S."/>
            <person name="Suzuki H."/>
            <person name="Nishi S."/>
            <person name="Hatada Y."/>
            <person name="Kawai S."/>
            <person name="Ito S."/>
            <person name="Horikoshi K."/>
        </authorList>
    </citation>
    <scope>NUCLEOTIDE SEQUENCE [LARGE SCALE GENOMIC DNA]</scope>
    <source>
        <strain>KSM-K16</strain>
    </source>
</reference>
<accession>Q5WEF6</accession>
<dbReference type="EC" id="2.7.1.11" evidence="1"/>
<dbReference type="EMBL" id="AP006627">
    <property type="protein sequence ID" value="BAD65254.1"/>
    <property type="molecule type" value="Genomic_DNA"/>
</dbReference>
<dbReference type="RefSeq" id="WP_011247562.1">
    <property type="nucleotide sequence ID" value="NC_006582.1"/>
</dbReference>
<dbReference type="SMR" id="Q5WEF6"/>
<dbReference type="STRING" id="66692.ABC2719"/>
<dbReference type="KEGG" id="bcl:ABC2719"/>
<dbReference type="eggNOG" id="COG0205">
    <property type="taxonomic scope" value="Bacteria"/>
</dbReference>
<dbReference type="HOGENOM" id="CLU_020655_0_1_9"/>
<dbReference type="OrthoDB" id="9802503at2"/>
<dbReference type="UniPathway" id="UPA00109">
    <property type="reaction ID" value="UER00182"/>
</dbReference>
<dbReference type="Proteomes" id="UP000001168">
    <property type="component" value="Chromosome"/>
</dbReference>
<dbReference type="GO" id="GO:0005945">
    <property type="term" value="C:6-phosphofructokinase complex"/>
    <property type="evidence" value="ECO:0007669"/>
    <property type="project" value="TreeGrafter"/>
</dbReference>
<dbReference type="GO" id="GO:0003872">
    <property type="term" value="F:6-phosphofructokinase activity"/>
    <property type="evidence" value="ECO:0007669"/>
    <property type="project" value="UniProtKB-UniRule"/>
</dbReference>
<dbReference type="GO" id="GO:0016208">
    <property type="term" value="F:AMP binding"/>
    <property type="evidence" value="ECO:0007669"/>
    <property type="project" value="TreeGrafter"/>
</dbReference>
<dbReference type="GO" id="GO:0005524">
    <property type="term" value="F:ATP binding"/>
    <property type="evidence" value="ECO:0007669"/>
    <property type="project" value="UniProtKB-KW"/>
</dbReference>
<dbReference type="GO" id="GO:0070095">
    <property type="term" value="F:fructose-6-phosphate binding"/>
    <property type="evidence" value="ECO:0007669"/>
    <property type="project" value="TreeGrafter"/>
</dbReference>
<dbReference type="GO" id="GO:0042802">
    <property type="term" value="F:identical protein binding"/>
    <property type="evidence" value="ECO:0007669"/>
    <property type="project" value="TreeGrafter"/>
</dbReference>
<dbReference type="GO" id="GO:0046872">
    <property type="term" value="F:metal ion binding"/>
    <property type="evidence" value="ECO:0007669"/>
    <property type="project" value="UniProtKB-KW"/>
</dbReference>
<dbReference type="GO" id="GO:0048029">
    <property type="term" value="F:monosaccharide binding"/>
    <property type="evidence" value="ECO:0007669"/>
    <property type="project" value="TreeGrafter"/>
</dbReference>
<dbReference type="GO" id="GO:0061621">
    <property type="term" value="P:canonical glycolysis"/>
    <property type="evidence" value="ECO:0007669"/>
    <property type="project" value="TreeGrafter"/>
</dbReference>
<dbReference type="GO" id="GO:0030388">
    <property type="term" value="P:fructose 1,6-bisphosphate metabolic process"/>
    <property type="evidence" value="ECO:0007669"/>
    <property type="project" value="TreeGrafter"/>
</dbReference>
<dbReference type="GO" id="GO:0006002">
    <property type="term" value="P:fructose 6-phosphate metabolic process"/>
    <property type="evidence" value="ECO:0007669"/>
    <property type="project" value="InterPro"/>
</dbReference>
<dbReference type="CDD" id="cd00763">
    <property type="entry name" value="Bacterial_PFK"/>
    <property type="match status" value="1"/>
</dbReference>
<dbReference type="FunFam" id="3.40.50.450:FF:000001">
    <property type="entry name" value="ATP-dependent 6-phosphofructokinase"/>
    <property type="match status" value="1"/>
</dbReference>
<dbReference type="FunFam" id="3.40.50.460:FF:000002">
    <property type="entry name" value="ATP-dependent 6-phosphofructokinase"/>
    <property type="match status" value="1"/>
</dbReference>
<dbReference type="Gene3D" id="3.40.50.450">
    <property type="match status" value="1"/>
</dbReference>
<dbReference type="Gene3D" id="3.40.50.460">
    <property type="entry name" value="Phosphofructokinase domain"/>
    <property type="match status" value="1"/>
</dbReference>
<dbReference type="HAMAP" id="MF_00339">
    <property type="entry name" value="Phosphofructokinase_I_B1"/>
    <property type="match status" value="1"/>
</dbReference>
<dbReference type="InterPro" id="IPR022953">
    <property type="entry name" value="ATP_PFK"/>
</dbReference>
<dbReference type="InterPro" id="IPR012003">
    <property type="entry name" value="ATP_PFK_prok-type"/>
</dbReference>
<dbReference type="InterPro" id="IPR012828">
    <property type="entry name" value="PFKA_ATP_prok"/>
</dbReference>
<dbReference type="InterPro" id="IPR015912">
    <property type="entry name" value="Phosphofructokinase_CS"/>
</dbReference>
<dbReference type="InterPro" id="IPR000023">
    <property type="entry name" value="Phosphofructokinase_dom"/>
</dbReference>
<dbReference type="InterPro" id="IPR035966">
    <property type="entry name" value="PKF_sf"/>
</dbReference>
<dbReference type="NCBIfam" id="TIGR02482">
    <property type="entry name" value="PFKA_ATP"/>
    <property type="match status" value="1"/>
</dbReference>
<dbReference type="NCBIfam" id="NF002872">
    <property type="entry name" value="PRK03202.1"/>
    <property type="match status" value="1"/>
</dbReference>
<dbReference type="PANTHER" id="PTHR13697:SF4">
    <property type="entry name" value="ATP-DEPENDENT 6-PHOSPHOFRUCTOKINASE"/>
    <property type="match status" value="1"/>
</dbReference>
<dbReference type="PANTHER" id="PTHR13697">
    <property type="entry name" value="PHOSPHOFRUCTOKINASE"/>
    <property type="match status" value="1"/>
</dbReference>
<dbReference type="Pfam" id="PF00365">
    <property type="entry name" value="PFK"/>
    <property type="match status" value="1"/>
</dbReference>
<dbReference type="PIRSF" id="PIRSF000532">
    <property type="entry name" value="ATP_PFK_prok"/>
    <property type="match status" value="1"/>
</dbReference>
<dbReference type="PRINTS" id="PR00476">
    <property type="entry name" value="PHFRCTKINASE"/>
</dbReference>
<dbReference type="SUPFAM" id="SSF53784">
    <property type="entry name" value="Phosphofructokinase"/>
    <property type="match status" value="1"/>
</dbReference>
<dbReference type="PROSITE" id="PS00433">
    <property type="entry name" value="PHOSPHOFRUCTOKINASE"/>
    <property type="match status" value="1"/>
</dbReference>
<proteinExistence type="inferred from homology"/>
<sequence>MKRIGVLTSGGDSPGMNAAIRAVVRKAIFHGLEVYGISYGYQGLINGDIKKMELGSVGDIIHRGGTMLYTARCEEFKTLEGQQKGIEQLKKFGIEGLVVIGGDGSYRGAQQLTKHGFPTIGVPGTIDNDIPGTDFTIGFDTALNTVIDAIDKIRDTATSHDRTYVIEVMGRHAGDLALWAGLADGAETIVIPEAEHNMEQILATIKRGQERGKKHSIIVVAEGVGSGIEFGDRISKEMNMETRVTVLGHIQRGGSPTGADRVLASRLGAKAVDLLLEGKAGMTVGIQKNELVYHPIDEILDRPHTIDQEMYKLSQELSI</sequence>
<gene>
    <name evidence="1" type="primary">pfkA</name>
    <name type="ordered locus">ABC2719</name>
</gene>
<name>PFKA_SHOC1</name>